<gene>
    <name evidence="1" type="primary">petM</name>
    <name type="ordered locus">tsr1416</name>
</gene>
<name>PETM_THEVB</name>
<reference key="1">
    <citation type="journal article" date="2002" name="DNA Res.">
        <title>Complete genome structure of the thermophilic cyanobacterium Thermosynechococcus elongatus BP-1.</title>
        <authorList>
            <person name="Nakamura Y."/>
            <person name="Kaneko T."/>
            <person name="Sato S."/>
            <person name="Ikeuchi M."/>
            <person name="Katoh H."/>
            <person name="Sasamoto S."/>
            <person name="Watanabe A."/>
            <person name="Iriguchi M."/>
            <person name="Kawashima K."/>
            <person name="Kimura T."/>
            <person name="Kishida Y."/>
            <person name="Kiyokawa C."/>
            <person name="Kohara M."/>
            <person name="Matsumoto M."/>
            <person name="Matsuno A."/>
            <person name="Nakazaki N."/>
            <person name="Shimpo S."/>
            <person name="Sugimoto M."/>
            <person name="Takeuchi C."/>
            <person name="Yamada M."/>
            <person name="Tabata S."/>
        </authorList>
    </citation>
    <scope>NUCLEOTIDE SEQUENCE [LARGE SCALE GENOMIC DNA]</scope>
    <source>
        <strain>NIES-2133 / IAM M-273 / BP-1</strain>
    </source>
</reference>
<accession>Q8DJ15</accession>
<organism>
    <name type="scientific">Thermosynechococcus vestitus (strain NIES-2133 / IAM M-273 / BP-1)</name>
    <dbReference type="NCBI Taxonomy" id="197221"/>
    <lineage>
        <taxon>Bacteria</taxon>
        <taxon>Bacillati</taxon>
        <taxon>Cyanobacteriota</taxon>
        <taxon>Cyanophyceae</taxon>
        <taxon>Acaryochloridales</taxon>
        <taxon>Thermosynechococcaceae</taxon>
        <taxon>Thermosynechococcus</taxon>
    </lineage>
</organism>
<proteinExistence type="inferred from homology"/>
<dbReference type="EMBL" id="BA000039">
    <property type="protein sequence ID" value="BAC08968.1"/>
    <property type="molecule type" value="Genomic_DNA"/>
</dbReference>
<dbReference type="RefSeq" id="NP_682206.1">
    <property type="nucleotide sequence ID" value="NC_004113.1"/>
</dbReference>
<dbReference type="RefSeq" id="WP_011057256.1">
    <property type="nucleotide sequence ID" value="NC_004113.1"/>
</dbReference>
<dbReference type="SMR" id="Q8DJ15"/>
<dbReference type="STRING" id="197221.gene:10748015"/>
<dbReference type="EnsemblBacteria" id="BAC08968">
    <property type="protein sequence ID" value="BAC08968"/>
    <property type="gene ID" value="BAC08968"/>
</dbReference>
<dbReference type="KEGG" id="tel:tsr1416"/>
<dbReference type="Proteomes" id="UP000000440">
    <property type="component" value="Chromosome"/>
</dbReference>
<dbReference type="GO" id="GO:0009512">
    <property type="term" value="C:cytochrome b6f complex"/>
    <property type="evidence" value="ECO:0007669"/>
    <property type="project" value="InterPro"/>
</dbReference>
<dbReference type="GO" id="GO:0031676">
    <property type="term" value="C:plasma membrane-derived thylakoid membrane"/>
    <property type="evidence" value="ECO:0007669"/>
    <property type="project" value="UniProtKB-SubCell"/>
</dbReference>
<dbReference type="GO" id="GO:0009055">
    <property type="term" value="F:electron transfer activity"/>
    <property type="evidence" value="ECO:0007669"/>
    <property type="project" value="UniProtKB-UniRule"/>
</dbReference>
<dbReference type="GO" id="GO:0015979">
    <property type="term" value="P:photosynthesis"/>
    <property type="evidence" value="ECO:0007669"/>
    <property type="project" value="UniProtKB-KW"/>
</dbReference>
<dbReference type="HAMAP" id="MF_00396">
    <property type="entry name" value="Cytb6_f_PetM"/>
    <property type="match status" value="1"/>
</dbReference>
<dbReference type="InterPro" id="IPR012595">
    <property type="entry name" value="PetM_cyt_b6/f_cplx_su7"/>
</dbReference>
<dbReference type="NCBIfam" id="NF008826">
    <property type="entry name" value="PRK11876.1-2"/>
    <property type="match status" value="1"/>
</dbReference>
<dbReference type="Pfam" id="PF08041">
    <property type="entry name" value="PetM"/>
    <property type="match status" value="1"/>
</dbReference>
<dbReference type="SUPFAM" id="SSF103441">
    <property type="entry name" value="PetM subunit of the cytochrome b6f complex"/>
    <property type="match status" value="1"/>
</dbReference>
<evidence type="ECO:0000255" key="1">
    <source>
        <dbReference type="HAMAP-Rule" id="MF_00396"/>
    </source>
</evidence>
<feature type="chain" id="PRO_0000218017" description="Cytochrome b6-f complex subunit 7">
    <location>
        <begin position="1"/>
        <end position="33"/>
    </location>
</feature>
<feature type="transmembrane region" description="Helical" evidence="1">
    <location>
        <begin position="5"/>
        <end position="25"/>
    </location>
</feature>
<protein>
    <recommendedName>
        <fullName evidence="1">Cytochrome b6-f complex subunit 7</fullName>
    </recommendedName>
    <alternativeName>
        <fullName evidence="1">Cytochrome b6-f complex subunit PetM</fullName>
    </alternativeName>
    <alternativeName>
        <fullName evidence="1">Cytochrome b6-f complex subunit VII</fullName>
    </alternativeName>
</protein>
<comment type="function">
    <text evidence="1">Component of the cytochrome b6-f complex, which mediates electron transfer between photosystem II (PSII) and photosystem I (PSI), cyclic electron flow around PSI, and state transitions.</text>
</comment>
<comment type="subunit">
    <text evidence="1">The 4 large subunits of the cytochrome b6-f complex are cytochrome b6, subunit IV (17 kDa polypeptide, PetD), cytochrome f and the Rieske protein, while the 4 small subunits are PetG, PetL, PetM and PetN. The complex functions as a dimer.</text>
</comment>
<comment type="subcellular location">
    <subcellularLocation>
        <location evidence="1">Cellular thylakoid membrane</location>
        <topology evidence="1">Single-pass membrane protein</topology>
    </subcellularLocation>
</comment>
<comment type="similarity">
    <text evidence="1">Belongs to the PetM family.</text>
</comment>
<keyword id="KW-0249">Electron transport</keyword>
<keyword id="KW-0472">Membrane</keyword>
<keyword id="KW-0602">Photosynthesis</keyword>
<keyword id="KW-1185">Reference proteome</keyword>
<keyword id="KW-0793">Thylakoid</keyword>
<keyword id="KW-0812">Transmembrane</keyword>
<keyword id="KW-1133">Transmembrane helix</keyword>
<keyword id="KW-0813">Transport</keyword>
<sequence>MAEEIFNTAVITFTLVLVGLGAGYLLLRLTPDD</sequence>